<reference key="1">
    <citation type="journal article" date="2005" name="Science">
        <title>The transcriptional landscape of the mammalian genome.</title>
        <authorList>
            <person name="Carninci P."/>
            <person name="Kasukawa T."/>
            <person name="Katayama S."/>
            <person name="Gough J."/>
            <person name="Frith M.C."/>
            <person name="Maeda N."/>
            <person name="Oyama R."/>
            <person name="Ravasi T."/>
            <person name="Lenhard B."/>
            <person name="Wells C."/>
            <person name="Kodzius R."/>
            <person name="Shimokawa K."/>
            <person name="Bajic V.B."/>
            <person name="Brenner S.E."/>
            <person name="Batalov S."/>
            <person name="Forrest A.R."/>
            <person name="Zavolan M."/>
            <person name="Davis M.J."/>
            <person name="Wilming L.G."/>
            <person name="Aidinis V."/>
            <person name="Allen J.E."/>
            <person name="Ambesi-Impiombato A."/>
            <person name="Apweiler R."/>
            <person name="Aturaliya R.N."/>
            <person name="Bailey T.L."/>
            <person name="Bansal M."/>
            <person name="Baxter L."/>
            <person name="Beisel K.W."/>
            <person name="Bersano T."/>
            <person name="Bono H."/>
            <person name="Chalk A.M."/>
            <person name="Chiu K.P."/>
            <person name="Choudhary V."/>
            <person name="Christoffels A."/>
            <person name="Clutterbuck D.R."/>
            <person name="Crowe M.L."/>
            <person name="Dalla E."/>
            <person name="Dalrymple B.P."/>
            <person name="de Bono B."/>
            <person name="Della Gatta G."/>
            <person name="di Bernardo D."/>
            <person name="Down T."/>
            <person name="Engstrom P."/>
            <person name="Fagiolini M."/>
            <person name="Faulkner G."/>
            <person name="Fletcher C.F."/>
            <person name="Fukushima T."/>
            <person name="Furuno M."/>
            <person name="Futaki S."/>
            <person name="Gariboldi M."/>
            <person name="Georgii-Hemming P."/>
            <person name="Gingeras T.R."/>
            <person name="Gojobori T."/>
            <person name="Green R.E."/>
            <person name="Gustincich S."/>
            <person name="Harbers M."/>
            <person name="Hayashi Y."/>
            <person name="Hensch T.K."/>
            <person name="Hirokawa N."/>
            <person name="Hill D."/>
            <person name="Huminiecki L."/>
            <person name="Iacono M."/>
            <person name="Ikeo K."/>
            <person name="Iwama A."/>
            <person name="Ishikawa T."/>
            <person name="Jakt M."/>
            <person name="Kanapin A."/>
            <person name="Katoh M."/>
            <person name="Kawasawa Y."/>
            <person name="Kelso J."/>
            <person name="Kitamura H."/>
            <person name="Kitano H."/>
            <person name="Kollias G."/>
            <person name="Krishnan S.P."/>
            <person name="Kruger A."/>
            <person name="Kummerfeld S.K."/>
            <person name="Kurochkin I.V."/>
            <person name="Lareau L.F."/>
            <person name="Lazarevic D."/>
            <person name="Lipovich L."/>
            <person name="Liu J."/>
            <person name="Liuni S."/>
            <person name="McWilliam S."/>
            <person name="Madan Babu M."/>
            <person name="Madera M."/>
            <person name="Marchionni L."/>
            <person name="Matsuda H."/>
            <person name="Matsuzawa S."/>
            <person name="Miki H."/>
            <person name="Mignone F."/>
            <person name="Miyake S."/>
            <person name="Morris K."/>
            <person name="Mottagui-Tabar S."/>
            <person name="Mulder N."/>
            <person name="Nakano N."/>
            <person name="Nakauchi H."/>
            <person name="Ng P."/>
            <person name="Nilsson R."/>
            <person name="Nishiguchi S."/>
            <person name="Nishikawa S."/>
            <person name="Nori F."/>
            <person name="Ohara O."/>
            <person name="Okazaki Y."/>
            <person name="Orlando V."/>
            <person name="Pang K.C."/>
            <person name="Pavan W.J."/>
            <person name="Pavesi G."/>
            <person name="Pesole G."/>
            <person name="Petrovsky N."/>
            <person name="Piazza S."/>
            <person name="Reed J."/>
            <person name="Reid J.F."/>
            <person name="Ring B.Z."/>
            <person name="Ringwald M."/>
            <person name="Rost B."/>
            <person name="Ruan Y."/>
            <person name="Salzberg S.L."/>
            <person name="Sandelin A."/>
            <person name="Schneider C."/>
            <person name="Schoenbach C."/>
            <person name="Sekiguchi K."/>
            <person name="Semple C.A."/>
            <person name="Seno S."/>
            <person name="Sessa L."/>
            <person name="Sheng Y."/>
            <person name="Shibata Y."/>
            <person name="Shimada H."/>
            <person name="Shimada K."/>
            <person name="Silva D."/>
            <person name="Sinclair B."/>
            <person name="Sperling S."/>
            <person name="Stupka E."/>
            <person name="Sugiura K."/>
            <person name="Sultana R."/>
            <person name="Takenaka Y."/>
            <person name="Taki K."/>
            <person name="Tammoja K."/>
            <person name="Tan S.L."/>
            <person name="Tang S."/>
            <person name="Taylor M.S."/>
            <person name="Tegner J."/>
            <person name="Teichmann S.A."/>
            <person name="Ueda H.R."/>
            <person name="van Nimwegen E."/>
            <person name="Verardo R."/>
            <person name="Wei C.L."/>
            <person name="Yagi K."/>
            <person name="Yamanishi H."/>
            <person name="Zabarovsky E."/>
            <person name="Zhu S."/>
            <person name="Zimmer A."/>
            <person name="Hide W."/>
            <person name="Bult C."/>
            <person name="Grimmond S.M."/>
            <person name="Teasdale R.D."/>
            <person name="Liu E.T."/>
            <person name="Brusic V."/>
            <person name="Quackenbush J."/>
            <person name="Wahlestedt C."/>
            <person name="Mattick J.S."/>
            <person name="Hume D.A."/>
            <person name="Kai C."/>
            <person name="Sasaki D."/>
            <person name="Tomaru Y."/>
            <person name="Fukuda S."/>
            <person name="Kanamori-Katayama M."/>
            <person name="Suzuki M."/>
            <person name="Aoki J."/>
            <person name="Arakawa T."/>
            <person name="Iida J."/>
            <person name="Imamura K."/>
            <person name="Itoh M."/>
            <person name="Kato T."/>
            <person name="Kawaji H."/>
            <person name="Kawagashira N."/>
            <person name="Kawashima T."/>
            <person name="Kojima M."/>
            <person name="Kondo S."/>
            <person name="Konno H."/>
            <person name="Nakano K."/>
            <person name="Ninomiya N."/>
            <person name="Nishio T."/>
            <person name="Okada M."/>
            <person name="Plessy C."/>
            <person name="Shibata K."/>
            <person name="Shiraki T."/>
            <person name="Suzuki S."/>
            <person name="Tagami M."/>
            <person name="Waki K."/>
            <person name="Watahiki A."/>
            <person name="Okamura-Oho Y."/>
            <person name="Suzuki H."/>
            <person name="Kawai J."/>
            <person name="Hayashizaki Y."/>
        </authorList>
    </citation>
    <scope>NUCLEOTIDE SEQUENCE [LARGE SCALE MRNA] (ISOFORM 1)</scope>
    <source>
        <strain>C57BL/6J</strain>
        <tissue>Bone marrow</tissue>
    </source>
</reference>
<reference key="2">
    <citation type="journal article" date="2009" name="PLoS Biol.">
        <title>Lineage-specific biology revealed by a finished genome assembly of the mouse.</title>
        <authorList>
            <person name="Church D.M."/>
            <person name="Goodstadt L."/>
            <person name="Hillier L.W."/>
            <person name="Zody M.C."/>
            <person name="Goldstein S."/>
            <person name="She X."/>
            <person name="Bult C.J."/>
            <person name="Agarwala R."/>
            <person name="Cherry J.L."/>
            <person name="DiCuccio M."/>
            <person name="Hlavina W."/>
            <person name="Kapustin Y."/>
            <person name="Meric P."/>
            <person name="Maglott D."/>
            <person name="Birtle Z."/>
            <person name="Marques A.C."/>
            <person name="Graves T."/>
            <person name="Zhou S."/>
            <person name="Teague B."/>
            <person name="Potamousis K."/>
            <person name="Churas C."/>
            <person name="Place M."/>
            <person name="Herschleb J."/>
            <person name="Runnheim R."/>
            <person name="Forrest D."/>
            <person name="Amos-Landgraf J."/>
            <person name="Schwartz D.C."/>
            <person name="Cheng Z."/>
            <person name="Lindblad-Toh K."/>
            <person name="Eichler E.E."/>
            <person name="Ponting C.P."/>
        </authorList>
    </citation>
    <scope>NUCLEOTIDE SEQUENCE [LARGE SCALE GENOMIC DNA]</scope>
    <source>
        <strain>C57BL/6J</strain>
    </source>
</reference>
<reference key="3">
    <citation type="journal article" date="2004" name="Genome Res.">
        <title>The status, quality, and expansion of the NIH full-length cDNA project: the Mammalian Gene Collection (MGC).</title>
        <authorList>
            <consortium name="The MGC Project Team"/>
        </authorList>
    </citation>
    <scope>NUCLEOTIDE SEQUENCE [LARGE SCALE MRNA] (ISOFORMS 1 AND 2)</scope>
    <source>
        <strain>Czech II</strain>
        <strain>FVB/N</strain>
        <strain>NMRI</strain>
        <tissue>Mammary tumor</tissue>
    </source>
</reference>
<reference key="4">
    <citation type="journal article" date="2010" name="Cell">
        <title>A tissue-specific atlas of mouse protein phosphorylation and expression.</title>
        <authorList>
            <person name="Huttlin E.L."/>
            <person name="Jedrychowski M.P."/>
            <person name="Elias J.E."/>
            <person name="Goswami T."/>
            <person name="Rad R."/>
            <person name="Beausoleil S.A."/>
            <person name="Villen J."/>
            <person name="Haas W."/>
            <person name="Sowa M.E."/>
            <person name="Gygi S.P."/>
        </authorList>
    </citation>
    <scope>IDENTIFICATION BY MASS SPECTROMETRY [LARGE SCALE ANALYSIS]</scope>
    <source>
        <tissue>Brown adipose tissue</tissue>
        <tissue>Liver</tissue>
        <tissue>Lung</tissue>
        <tissue>Testis</tissue>
    </source>
</reference>
<comment type="function">
    <text evidence="1">Functions in replication-dependent translation of histone mRNAs which differ from other eukaryotic mRNAs in that they do not end with a poly-A tail but a stem-loop. May participate in circularizing those mRNAs specifically enhancing their translation (By similarity).</text>
</comment>
<comment type="subunit">
    <text evidence="1">Interacts with EIF4G1, EIF4G2 and SLBP; probably tethered by SLBP to the 3'-end of mRNAs ending with the histone stem-loop, it also interacts with EIF4G1 which is bound to their 5'-end.</text>
</comment>
<comment type="subcellular location">
    <subcellularLocation>
        <location evidence="1">Cytoplasm</location>
    </subcellularLocation>
    <subcellularLocation>
        <location evidence="1">Nucleus</location>
    </subcellularLocation>
</comment>
<comment type="alternative products">
    <event type="alternative splicing"/>
    <isoform>
        <id>Q3UBZ5-1</id>
        <name>1</name>
        <sequence type="displayed"/>
    </isoform>
    <isoform>
        <id>Q3UBZ5-2</id>
        <name>2</name>
        <sequence type="described" ref="VSP_033878 VSP_033879"/>
    </isoform>
</comment>
<comment type="similarity">
    <text evidence="3">Belongs to the MIF4GD family.</text>
</comment>
<protein>
    <recommendedName>
        <fullName>MIF4G domain-containing protein</fullName>
    </recommendedName>
</protein>
<keyword id="KW-0025">Alternative splicing</keyword>
<keyword id="KW-0963">Cytoplasm</keyword>
<keyword id="KW-0539">Nucleus</keyword>
<keyword id="KW-1185">Reference proteome</keyword>
<keyword id="KW-0810">Translation regulation</keyword>
<feature type="chain" id="PRO_0000337090" description="MIF4G domain-containing protein">
    <location>
        <begin position="1"/>
        <end position="222"/>
    </location>
</feature>
<feature type="domain" description="MIF4G">
    <location>
        <begin position="3"/>
        <end position="205"/>
    </location>
</feature>
<feature type="splice variant" id="VSP_033878" description="In isoform 2." evidence="2">
    <original>EYDAREQ</original>
    <variation>DWPSLRV</variation>
    <location>
        <begin position="86"/>
        <end position="92"/>
    </location>
</feature>
<feature type="splice variant" id="VSP_033879" description="In isoform 2." evidence="2">
    <location>
        <begin position="93"/>
        <end position="222"/>
    </location>
</feature>
<feature type="sequence conflict" description="In Ref. 3; AAH26740." evidence="3" ref="3">
    <original>E</original>
    <variation>Q</variation>
    <location>
        <position position="17"/>
    </location>
</feature>
<feature type="sequence conflict" description="In Ref. 3; AAH26745/AAH55812." evidence="3" ref="3">
    <original>G</original>
    <variation>S</variation>
    <location>
        <position position="30"/>
    </location>
</feature>
<organism>
    <name type="scientific">Mus musculus</name>
    <name type="common">Mouse</name>
    <dbReference type="NCBI Taxonomy" id="10090"/>
    <lineage>
        <taxon>Eukaryota</taxon>
        <taxon>Metazoa</taxon>
        <taxon>Chordata</taxon>
        <taxon>Craniata</taxon>
        <taxon>Vertebrata</taxon>
        <taxon>Euteleostomi</taxon>
        <taxon>Mammalia</taxon>
        <taxon>Eutheria</taxon>
        <taxon>Euarchontoglires</taxon>
        <taxon>Glires</taxon>
        <taxon>Rodentia</taxon>
        <taxon>Myomorpha</taxon>
        <taxon>Muroidea</taxon>
        <taxon>Muridae</taxon>
        <taxon>Murinae</taxon>
        <taxon>Mus</taxon>
        <taxon>Mus</taxon>
    </lineage>
</organism>
<proteinExistence type="evidence at protein level"/>
<dbReference type="EMBL" id="AK150749">
    <property type="protein sequence ID" value="BAE29819.1"/>
    <property type="molecule type" value="mRNA"/>
</dbReference>
<dbReference type="EMBL" id="AL645470">
    <property type="status" value="NOT_ANNOTATED_CDS"/>
    <property type="molecule type" value="Genomic_DNA"/>
</dbReference>
<dbReference type="EMBL" id="BC026740">
    <property type="protein sequence ID" value="AAH26740.1"/>
    <property type="molecule type" value="mRNA"/>
</dbReference>
<dbReference type="EMBL" id="BC026745">
    <property type="protein sequence ID" value="AAH26745.1"/>
    <property type="molecule type" value="mRNA"/>
</dbReference>
<dbReference type="EMBL" id="BC055812">
    <property type="protein sequence ID" value="AAH55812.1"/>
    <property type="molecule type" value="mRNA"/>
</dbReference>
<dbReference type="CCDS" id="CCDS25643.1">
    <molecule id="Q3UBZ5-1"/>
</dbReference>
<dbReference type="RefSeq" id="NP_001230513.1">
    <molecule id="Q3UBZ5-1"/>
    <property type="nucleotide sequence ID" value="NM_001243584.1"/>
</dbReference>
<dbReference type="RefSeq" id="NP_081438.4">
    <molecule id="Q3UBZ5-1"/>
    <property type="nucleotide sequence ID" value="NM_027162.4"/>
</dbReference>
<dbReference type="RefSeq" id="XP_036012855.1">
    <molecule id="Q3UBZ5-1"/>
    <property type="nucleotide sequence ID" value="XM_036156962.1"/>
</dbReference>
<dbReference type="SMR" id="Q3UBZ5"/>
<dbReference type="BioGRID" id="213607">
    <property type="interactions" value="3"/>
</dbReference>
<dbReference type="ComplexPortal" id="CPX-1312">
    <property type="entry name" value="SLBP-SLIP1 complex"/>
</dbReference>
<dbReference type="FunCoup" id="Q3UBZ5">
    <property type="interactions" value="1783"/>
</dbReference>
<dbReference type="IntAct" id="Q3UBZ5">
    <property type="interactions" value="1"/>
</dbReference>
<dbReference type="STRING" id="10090.ENSMUSP00000102116"/>
<dbReference type="iPTMnet" id="Q3UBZ5"/>
<dbReference type="PhosphoSitePlus" id="Q3UBZ5"/>
<dbReference type="SwissPalm" id="Q3UBZ5"/>
<dbReference type="PaxDb" id="10090-ENSMUSP00000102116"/>
<dbReference type="ProteomicsDB" id="292317">
    <molecule id="Q3UBZ5-1"/>
</dbReference>
<dbReference type="ProteomicsDB" id="292318">
    <molecule id="Q3UBZ5-2"/>
</dbReference>
<dbReference type="Pumba" id="Q3UBZ5"/>
<dbReference type="Antibodypedia" id="32154">
    <property type="antibodies" value="143 antibodies from 19 providers"/>
</dbReference>
<dbReference type="DNASU" id="69674"/>
<dbReference type="Ensembl" id="ENSMUST00000021087.14">
    <molecule id="Q3UBZ5-1"/>
    <property type="protein sequence ID" value="ENSMUSP00000021087.8"/>
    <property type="gene ID" value="ENSMUSG00000020743.16"/>
</dbReference>
<dbReference type="Ensembl" id="ENSMUST00000106507.9">
    <molecule id="Q3UBZ5-1"/>
    <property type="protein sequence ID" value="ENSMUSP00000102116.3"/>
    <property type="gene ID" value="ENSMUSG00000020743.16"/>
</dbReference>
<dbReference type="GeneID" id="69674"/>
<dbReference type="KEGG" id="mmu:69674"/>
<dbReference type="UCSC" id="uc007mib.1">
    <molecule id="Q3UBZ5-1"/>
    <property type="organism name" value="mouse"/>
</dbReference>
<dbReference type="UCSC" id="uc007mie.3">
    <molecule id="Q3UBZ5-2"/>
    <property type="organism name" value="mouse"/>
</dbReference>
<dbReference type="AGR" id="MGI:1916924"/>
<dbReference type="CTD" id="57409"/>
<dbReference type="MGI" id="MGI:1916924">
    <property type="gene designation" value="Mif4gd"/>
</dbReference>
<dbReference type="VEuPathDB" id="HostDB:ENSMUSG00000020743"/>
<dbReference type="eggNOG" id="KOG3942">
    <property type="taxonomic scope" value="Eukaryota"/>
</dbReference>
<dbReference type="GeneTree" id="ENSGT00940000153432"/>
<dbReference type="HOGENOM" id="CLU_081010_1_0_1"/>
<dbReference type="InParanoid" id="Q3UBZ5"/>
<dbReference type="OMA" id="PCCSCTG"/>
<dbReference type="OrthoDB" id="6357832at2759"/>
<dbReference type="PhylomeDB" id="Q3UBZ5"/>
<dbReference type="BioGRID-ORCS" id="69674">
    <property type="hits" value="3 hits in 77 CRISPR screens"/>
</dbReference>
<dbReference type="ChiTaRS" id="Mif4gd">
    <property type="organism name" value="mouse"/>
</dbReference>
<dbReference type="PRO" id="PR:Q3UBZ5"/>
<dbReference type="Proteomes" id="UP000000589">
    <property type="component" value="Chromosome 11"/>
</dbReference>
<dbReference type="RNAct" id="Q3UBZ5">
    <property type="molecule type" value="protein"/>
</dbReference>
<dbReference type="Bgee" id="ENSMUSG00000020743">
    <property type="expression patterns" value="Expressed in spermatocyte and 228 other cell types or tissues"/>
</dbReference>
<dbReference type="ExpressionAtlas" id="Q3UBZ5">
    <property type="expression patterns" value="baseline and differential"/>
</dbReference>
<dbReference type="GO" id="GO:0005737">
    <property type="term" value="C:cytoplasm"/>
    <property type="evidence" value="ECO:0000303"/>
    <property type="project" value="ComplexPortal"/>
</dbReference>
<dbReference type="GO" id="GO:0005829">
    <property type="term" value="C:cytosol"/>
    <property type="evidence" value="ECO:0007669"/>
    <property type="project" value="Ensembl"/>
</dbReference>
<dbReference type="GO" id="GO:0005794">
    <property type="term" value="C:Golgi apparatus"/>
    <property type="evidence" value="ECO:0007669"/>
    <property type="project" value="Ensembl"/>
</dbReference>
<dbReference type="GO" id="GO:0062073">
    <property type="term" value="C:histone mRNA stem-loop binding complex"/>
    <property type="evidence" value="ECO:0000266"/>
    <property type="project" value="ComplexPortal"/>
</dbReference>
<dbReference type="GO" id="GO:0005730">
    <property type="term" value="C:nucleolus"/>
    <property type="evidence" value="ECO:0007669"/>
    <property type="project" value="Ensembl"/>
</dbReference>
<dbReference type="GO" id="GO:0042802">
    <property type="term" value="F:identical protein binding"/>
    <property type="evidence" value="ECO:0007669"/>
    <property type="project" value="Ensembl"/>
</dbReference>
<dbReference type="GO" id="GO:0003723">
    <property type="term" value="F:RNA binding"/>
    <property type="evidence" value="ECO:0007669"/>
    <property type="project" value="InterPro"/>
</dbReference>
<dbReference type="GO" id="GO:0002191">
    <property type="term" value="P:cap-dependent translational initiation"/>
    <property type="evidence" value="ECO:0000266"/>
    <property type="project" value="ComplexPortal"/>
</dbReference>
<dbReference type="GO" id="GO:0006417">
    <property type="term" value="P:regulation of translation"/>
    <property type="evidence" value="ECO:0007669"/>
    <property type="project" value="UniProtKB-KW"/>
</dbReference>
<dbReference type="FunFam" id="1.25.40.180:FF:000025">
    <property type="entry name" value="MIF4G domain containing a"/>
    <property type="match status" value="1"/>
</dbReference>
<dbReference type="Gene3D" id="1.25.40.180">
    <property type="match status" value="1"/>
</dbReference>
<dbReference type="InterPro" id="IPR016024">
    <property type="entry name" value="ARM-type_fold"/>
</dbReference>
<dbReference type="InterPro" id="IPR003890">
    <property type="entry name" value="MIF4G-like_typ-3"/>
</dbReference>
<dbReference type="InterPro" id="IPR051367">
    <property type="entry name" value="mRNA_TranslReg/HistoneTransl"/>
</dbReference>
<dbReference type="PANTHER" id="PTHR23254">
    <property type="entry name" value="EIF4G DOMAIN PROTEIN"/>
    <property type="match status" value="1"/>
</dbReference>
<dbReference type="PANTHER" id="PTHR23254:SF17">
    <property type="entry name" value="MIF4G DOMAIN-CONTAINING PROTEIN"/>
    <property type="match status" value="1"/>
</dbReference>
<dbReference type="Pfam" id="PF02854">
    <property type="entry name" value="MIF4G"/>
    <property type="match status" value="1"/>
</dbReference>
<dbReference type="SMART" id="SM00543">
    <property type="entry name" value="MIF4G"/>
    <property type="match status" value="1"/>
</dbReference>
<dbReference type="SUPFAM" id="SSF48371">
    <property type="entry name" value="ARM repeat"/>
    <property type="match status" value="1"/>
</dbReference>
<sequence length="222" mass="25493">MSEASRDDYKIQSFDAETQQLLKTALKDPGAVDLERVANVIVDHSLQDCVFSKEAGRMCYAIIQAESKQAGQSVFRRGLLNRLQKEYDAREQLRACSLQGWVCYVTFICNIFDYLRVNNMPMMALVNPVYDCLFQLAQPESLSREEEVDCLVLQLHRVGEQLEKMNGQRMDELFILIRDGFLLPTDLSSLARLLLLEMIEFRAAGWKTTPAAHKYYYSEVSD</sequence>
<name>MI4GD_MOUSE</name>
<gene>
    <name type="primary">Mif4gd</name>
</gene>
<accession>Q3UBZ5</accession>
<accession>Q05CE9</accession>
<accession>Q7TMH3</accession>
<accession>Q8R333</accession>
<evidence type="ECO:0000250" key="1"/>
<evidence type="ECO:0000303" key="2">
    <source>
    </source>
</evidence>
<evidence type="ECO:0000305" key="3"/>